<comment type="function">
    <text evidence="2 3">May play a role in microtubule organization. May play a role in cell spreading and cell migration of epithelial cells; the function may involve the AKT1 signaling pathway.</text>
</comment>
<comment type="subunit">
    <text evidence="3">Interacts with AKT1; the interaction is transient and follows AKT1 activation. Interacts with PPP2CA and alpha-tubulin.</text>
</comment>
<comment type="interaction">
    <interactant intactId="EBI-3942563">
        <id>Q1W6H9</id>
    </interactant>
    <interactant intactId="EBI-296087">
        <id>P31749</id>
        <label>AKT1</label>
    </interactant>
    <organismsDiffer>false</organismsDiffer>
    <experiments>2</experiments>
</comment>
<comment type="interaction">
    <interactant intactId="EBI-3942563">
        <id>Q1W6H9</id>
    </interactant>
    <interactant intactId="EBI-749343">
        <id>P49674</id>
        <label>CSNK1E</label>
    </interactant>
    <organismsDiffer>false</organismsDiffer>
    <experiments>4</experiments>
</comment>
<comment type="interaction">
    <interactant intactId="EBI-3942563">
        <id>Q1W6H9</id>
    </interactant>
    <interactant intactId="EBI-298707">
        <id>P31750</id>
        <label>Akt1</label>
    </interactant>
    <organismsDiffer>true</organismsDiffer>
    <experiments>3</experiments>
</comment>
<comment type="subcellular location">
    <subcellularLocation>
        <location evidence="2 3">Cytoplasm</location>
        <location evidence="2 3">Cytoskeleton</location>
    </subcellularLocation>
    <subcellularLocation>
        <location evidence="2 3">Cytoplasm</location>
        <location evidence="2 3">Cytoskeleton</location>
        <location evidence="2 3">Microtubule organizing center</location>
        <location evidence="2 3">Centrosome</location>
    </subcellularLocation>
    <subcellularLocation>
        <location evidence="2 3">Cytoplasm</location>
        <location evidence="2 3">Cytoskeleton</location>
        <location evidence="2 3">Spindle pole</location>
    </subcellularLocation>
    <subcellularLocation>
        <location evidence="2 3">Nucleus</location>
    </subcellularLocation>
    <text evidence="2 3">Colocalizes with microtubules during interphase (PubMed:17499476). Detected at the mitotic spindle poles (PubMed:17499476). Colocalizes with AKT1 at the cell cortex (PubMed:19698782).</text>
</comment>
<comment type="tissue specificity">
    <text evidence="2">Detected in stomach, thyroid, trachea, adrenal gland and testis, and at low levels in prostate, ovary, intestine, colon, spinal cord and lymph node.</text>
</comment>
<comment type="similarity">
    <text evidence="4">Belongs to the FAM110 family.</text>
</comment>
<accession>Q1W6H9</accession>
<dbReference type="EMBL" id="DQ431183">
    <property type="protein sequence ID" value="ABD92775.1"/>
    <property type="molecule type" value="mRNA"/>
</dbReference>
<dbReference type="EMBL" id="AC097643">
    <property type="status" value="NOT_ANNOTATED_CDS"/>
    <property type="molecule type" value="Genomic_DNA"/>
</dbReference>
<dbReference type="CCDS" id="CCDS42645.1"/>
<dbReference type="RefSeq" id="NP_001071178.2">
    <property type="nucleotide sequence ID" value="NM_001077710.3"/>
</dbReference>
<dbReference type="BioGRID" id="567837">
    <property type="interactions" value="16"/>
</dbReference>
<dbReference type="FunCoup" id="Q1W6H9">
    <property type="interactions" value="213"/>
</dbReference>
<dbReference type="IntAct" id="Q1W6H9">
    <property type="interactions" value="8"/>
</dbReference>
<dbReference type="MINT" id="Q1W6H9"/>
<dbReference type="STRING" id="9606.ENSP00000328347"/>
<dbReference type="iPTMnet" id="Q1W6H9"/>
<dbReference type="PhosphoSitePlus" id="Q1W6H9"/>
<dbReference type="BioMuta" id="FAM110C"/>
<dbReference type="DMDM" id="296434495"/>
<dbReference type="jPOST" id="Q1W6H9"/>
<dbReference type="MassIVE" id="Q1W6H9"/>
<dbReference type="PaxDb" id="9606-ENSP00000328347"/>
<dbReference type="PeptideAtlas" id="Q1W6H9"/>
<dbReference type="ProteomicsDB" id="61250"/>
<dbReference type="Antibodypedia" id="49861">
    <property type="antibodies" value="25 antibodies from 9 providers"/>
</dbReference>
<dbReference type="DNASU" id="642273"/>
<dbReference type="Ensembl" id="ENST00000327669.5">
    <property type="protein sequence ID" value="ENSP00000328347.4"/>
    <property type="gene ID" value="ENSG00000184731.6"/>
</dbReference>
<dbReference type="GeneID" id="642273"/>
<dbReference type="KEGG" id="hsa:642273"/>
<dbReference type="MANE-Select" id="ENST00000327669.5">
    <property type="protein sequence ID" value="ENSP00000328347.4"/>
    <property type="RefSeq nucleotide sequence ID" value="NM_001077710.3"/>
    <property type="RefSeq protein sequence ID" value="NP_001071178.2"/>
</dbReference>
<dbReference type="UCSC" id="uc010yim.3">
    <property type="organism name" value="human"/>
</dbReference>
<dbReference type="AGR" id="HGNC:33340"/>
<dbReference type="CTD" id="642273"/>
<dbReference type="DisGeNET" id="642273"/>
<dbReference type="GeneCards" id="FAM110C"/>
<dbReference type="HGNC" id="HGNC:33340">
    <property type="gene designation" value="FAM110C"/>
</dbReference>
<dbReference type="HPA" id="ENSG00000184731">
    <property type="expression patterns" value="Tissue enhanced (esophagus)"/>
</dbReference>
<dbReference type="MIM" id="611395">
    <property type="type" value="gene"/>
</dbReference>
<dbReference type="neXtProt" id="NX_Q1W6H9"/>
<dbReference type="OpenTargets" id="ENSG00000184731"/>
<dbReference type="PharmGKB" id="PA162385674"/>
<dbReference type="VEuPathDB" id="HostDB:ENSG00000184731"/>
<dbReference type="eggNOG" id="ENOG502S0DB">
    <property type="taxonomic scope" value="Eukaryota"/>
</dbReference>
<dbReference type="GeneTree" id="ENSGT00950000183056"/>
<dbReference type="HOGENOM" id="CLU_050540_0_0_1"/>
<dbReference type="InParanoid" id="Q1W6H9"/>
<dbReference type="OMA" id="YCGLEQE"/>
<dbReference type="OrthoDB" id="10028183at2759"/>
<dbReference type="PAN-GO" id="Q1W6H9">
    <property type="GO annotations" value="4 GO annotations based on evolutionary models"/>
</dbReference>
<dbReference type="PhylomeDB" id="Q1W6H9"/>
<dbReference type="TreeFam" id="TF330964"/>
<dbReference type="PathwayCommons" id="Q1W6H9"/>
<dbReference type="SignaLink" id="Q1W6H9"/>
<dbReference type="BioGRID-ORCS" id="642273">
    <property type="hits" value="18 hits in 1153 CRISPR screens"/>
</dbReference>
<dbReference type="CD-CODE" id="8C2F96ED">
    <property type="entry name" value="Centrosome"/>
</dbReference>
<dbReference type="ChiTaRS" id="FAM110C">
    <property type="organism name" value="human"/>
</dbReference>
<dbReference type="GenomeRNAi" id="642273"/>
<dbReference type="Pharos" id="Q1W6H9">
    <property type="development level" value="Tbio"/>
</dbReference>
<dbReference type="PRO" id="PR:Q1W6H9"/>
<dbReference type="Proteomes" id="UP000005640">
    <property type="component" value="Chromosome 2"/>
</dbReference>
<dbReference type="RNAct" id="Q1W6H9">
    <property type="molecule type" value="protein"/>
</dbReference>
<dbReference type="Bgee" id="ENSG00000184731">
    <property type="expression patterns" value="Expressed in pancreatic ductal cell and 146 other cell types or tissues"/>
</dbReference>
<dbReference type="GO" id="GO:0005938">
    <property type="term" value="C:cell cortex"/>
    <property type="evidence" value="ECO:0000314"/>
    <property type="project" value="UniProtKB"/>
</dbReference>
<dbReference type="GO" id="GO:0005813">
    <property type="term" value="C:centrosome"/>
    <property type="evidence" value="ECO:0007669"/>
    <property type="project" value="UniProtKB-SubCell"/>
</dbReference>
<dbReference type="GO" id="GO:0005874">
    <property type="term" value="C:microtubule"/>
    <property type="evidence" value="ECO:0007669"/>
    <property type="project" value="UniProtKB-KW"/>
</dbReference>
<dbReference type="GO" id="GO:0005634">
    <property type="term" value="C:nucleus"/>
    <property type="evidence" value="ECO:0007669"/>
    <property type="project" value="UniProtKB-SubCell"/>
</dbReference>
<dbReference type="GO" id="GO:0000922">
    <property type="term" value="C:spindle pole"/>
    <property type="evidence" value="ECO:0007669"/>
    <property type="project" value="UniProtKB-SubCell"/>
</dbReference>
<dbReference type="GO" id="GO:0043014">
    <property type="term" value="F:alpha-tubulin binding"/>
    <property type="evidence" value="ECO:0000314"/>
    <property type="project" value="UniProtKB"/>
</dbReference>
<dbReference type="GO" id="GO:0030335">
    <property type="term" value="P:positive regulation of cell migration"/>
    <property type="evidence" value="ECO:0000315"/>
    <property type="project" value="UniProtKB"/>
</dbReference>
<dbReference type="GO" id="GO:0051897">
    <property type="term" value="P:positive regulation of phosphatidylinositol 3-kinase/protein kinase B signal transduction"/>
    <property type="evidence" value="ECO:0000315"/>
    <property type="project" value="UniProtKB"/>
</dbReference>
<dbReference type="GO" id="GO:0060491">
    <property type="term" value="P:regulation of cell projection assembly"/>
    <property type="evidence" value="ECO:0000315"/>
    <property type="project" value="UniProtKB"/>
</dbReference>
<dbReference type="InterPro" id="IPR025740">
    <property type="entry name" value="FAM110"/>
</dbReference>
<dbReference type="InterPro" id="IPR025741">
    <property type="entry name" value="FAM110_C"/>
</dbReference>
<dbReference type="InterPro" id="IPR025739">
    <property type="entry name" value="FAM110_N"/>
</dbReference>
<dbReference type="PANTHER" id="PTHR14758">
    <property type="entry name" value="AGAP005440-PA"/>
    <property type="match status" value="1"/>
</dbReference>
<dbReference type="PANTHER" id="PTHR14758:SF5">
    <property type="entry name" value="PROTEIN FAM110C"/>
    <property type="match status" value="1"/>
</dbReference>
<dbReference type="Pfam" id="PF14160">
    <property type="entry name" value="FAM110_C"/>
    <property type="match status" value="1"/>
</dbReference>
<dbReference type="Pfam" id="PF14161">
    <property type="entry name" value="FAM110_N"/>
    <property type="match status" value="1"/>
</dbReference>
<evidence type="ECO:0000256" key="1">
    <source>
        <dbReference type="SAM" id="MobiDB-lite"/>
    </source>
</evidence>
<evidence type="ECO:0000269" key="2">
    <source>
    </source>
</evidence>
<evidence type="ECO:0000269" key="3">
    <source>
    </source>
</evidence>
<evidence type="ECO:0000305" key="4"/>
<evidence type="ECO:0007744" key="5">
    <source>
    </source>
</evidence>
<name>F110C_HUMAN</name>
<feature type="chain" id="PRO_0000293461" description="Protein FAM110C">
    <location>
        <begin position="1"/>
        <end position="321"/>
    </location>
</feature>
<feature type="region of interest" description="Disordered" evidence="1">
    <location>
        <begin position="1"/>
        <end position="84"/>
    </location>
</feature>
<feature type="region of interest" description="Disordered" evidence="1">
    <location>
        <begin position="111"/>
        <end position="203"/>
    </location>
</feature>
<feature type="compositionally biased region" description="Basic and acidic residues" evidence="1">
    <location>
        <begin position="15"/>
        <end position="46"/>
    </location>
</feature>
<feature type="compositionally biased region" description="Basic and acidic residues" evidence="1">
    <location>
        <begin position="131"/>
        <end position="145"/>
    </location>
</feature>
<feature type="compositionally biased region" description="Low complexity" evidence="1">
    <location>
        <begin position="169"/>
        <end position="181"/>
    </location>
</feature>
<feature type="modified residue" description="Phosphoserine" evidence="5">
    <location>
        <position position="241"/>
    </location>
</feature>
<feature type="sequence conflict" description="In Ref. 1; ABD92775." evidence="4" ref="1">
    <original>I</original>
    <variation>T</variation>
    <location>
        <position position="164"/>
    </location>
</feature>
<keyword id="KW-0963">Cytoplasm</keyword>
<keyword id="KW-0206">Cytoskeleton</keyword>
<keyword id="KW-0493">Microtubule</keyword>
<keyword id="KW-0539">Nucleus</keyword>
<keyword id="KW-0597">Phosphoprotein</keyword>
<keyword id="KW-1267">Proteomics identification</keyword>
<keyword id="KW-1185">Reference proteome</keyword>
<organism>
    <name type="scientific">Homo sapiens</name>
    <name type="common">Human</name>
    <dbReference type="NCBI Taxonomy" id="9606"/>
    <lineage>
        <taxon>Eukaryota</taxon>
        <taxon>Metazoa</taxon>
        <taxon>Chordata</taxon>
        <taxon>Craniata</taxon>
        <taxon>Vertebrata</taxon>
        <taxon>Euteleostomi</taxon>
        <taxon>Mammalia</taxon>
        <taxon>Eutheria</taxon>
        <taxon>Euarchontoglires</taxon>
        <taxon>Primates</taxon>
        <taxon>Haplorrhini</taxon>
        <taxon>Catarrhini</taxon>
        <taxon>Hominidae</taxon>
        <taxon>Homo</taxon>
    </lineage>
</organism>
<reference key="1">
    <citation type="journal article" date="2007" name="Genomics">
        <title>Characterization of the FAM110 gene family.</title>
        <authorList>
            <person name="Hauge H."/>
            <person name="Patzke S."/>
            <person name="Aasheim H.-C."/>
        </authorList>
    </citation>
    <scope>NUCLEOTIDE SEQUENCE [MRNA]</scope>
    <scope>FUNCTION</scope>
    <scope>SUBCELLULAR LOCATION</scope>
    <scope>TISSUE SPECIFICITY</scope>
</reference>
<reference key="2">
    <citation type="journal article" date="2005" name="Nature">
        <title>Generation and annotation of the DNA sequences of human chromosomes 2 and 4.</title>
        <authorList>
            <person name="Hillier L.W."/>
            <person name="Graves T.A."/>
            <person name="Fulton R.S."/>
            <person name="Fulton L.A."/>
            <person name="Pepin K.H."/>
            <person name="Minx P."/>
            <person name="Wagner-McPherson C."/>
            <person name="Layman D."/>
            <person name="Wylie K."/>
            <person name="Sekhon M."/>
            <person name="Becker M.C."/>
            <person name="Fewell G.A."/>
            <person name="Delehaunty K.D."/>
            <person name="Miner T.L."/>
            <person name="Nash W.E."/>
            <person name="Kremitzki C."/>
            <person name="Oddy L."/>
            <person name="Du H."/>
            <person name="Sun H."/>
            <person name="Bradshaw-Cordum H."/>
            <person name="Ali J."/>
            <person name="Carter J."/>
            <person name="Cordes M."/>
            <person name="Harris A."/>
            <person name="Isak A."/>
            <person name="van Brunt A."/>
            <person name="Nguyen C."/>
            <person name="Du F."/>
            <person name="Courtney L."/>
            <person name="Kalicki J."/>
            <person name="Ozersky P."/>
            <person name="Abbott S."/>
            <person name="Armstrong J."/>
            <person name="Belter E.A."/>
            <person name="Caruso L."/>
            <person name="Cedroni M."/>
            <person name="Cotton M."/>
            <person name="Davidson T."/>
            <person name="Desai A."/>
            <person name="Elliott G."/>
            <person name="Erb T."/>
            <person name="Fronick C."/>
            <person name="Gaige T."/>
            <person name="Haakenson W."/>
            <person name="Haglund K."/>
            <person name="Holmes A."/>
            <person name="Harkins R."/>
            <person name="Kim K."/>
            <person name="Kruchowski S.S."/>
            <person name="Strong C.M."/>
            <person name="Grewal N."/>
            <person name="Goyea E."/>
            <person name="Hou S."/>
            <person name="Levy A."/>
            <person name="Martinka S."/>
            <person name="Mead K."/>
            <person name="McLellan M.D."/>
            <person name="Meyer R."/>
            <person name="Randall-Maher J."/>
            <person name="Tomlinson C."/>
            <person name="Dauphin-Kohlberg S."/>
            <person name="Kozlowicz-Reilly A."/>
            <person name="Shah N."/>
            <person name="Swearengen-Shahid S."/>
            <person name="Snider J."/>
            <person name="Strong J.T."/>
            <person name="Thompson J."/>
            <person name="Yoakum M."/>
            <person name="Leonard S."/>
            <person name="Pearman C."/>
            <person name="Trani L."/>
            <person name="Radionenko M."/>
            <person name="Waligorski J.E."/>
            <person name="Wang C."/>
            <person name="Rock S.M."/>
            <person name="Tin-Wollam A.-M."/>
            <person name="Maupin R."/>
            <person name="Latreille P."/>
            <person name="Wendl M.C."/>
            <person name="Yang S.-P."/>
            <person name="Pohl C."/>
            <person name="Wallis J.W."/>
            <person name="Spieth J."/>
            <person name="Bieri T.A."/>
            <person name="Berkowicz N."/>
            <person name="Nelson J.O."/>
            <person name="Osborne J."/>
            <person name="Ding L."/>
            <person name="Meyer R."/>
            <person name="Sabo A."/>
            <person name="Shotland Y."/>
            <person name="Sinha P."/>
            <person name="Wohldmann P.E."/>
            <person name="Cook L.L."/>
            <person name="Hickenbotham M.T."/>
            <person name="Eldred J."/>
            <person name="Williams D."/>
            <person name="Jones T.A."/>
            <person name="She X."/>
            <person name="Ciccarelli F.D."/>
            <person name="Izaurralde E."/>
            <person name="Taylor J."/>
            <person name="Schmutz J."/>
            <person name="Myers R.M."/>
            <person name="Cox D.R."/>
            <person name="Huang X."/>
            <person name="McPherson J.D."/>
            <person name="Mardis E.R."/>
            <person name="Clifton S.W."/>
            <person name="Warren W.C."/>
            <person name="Chinwalla A.T."/>
            <person name="Eddy S.R."/>
            <person name="Marra M.A."/>
            <person name="Ovcharenko I."/>
            <person name="Furey T.S."/>
            <person name="Miller W."/>
            <person name="Eichler E.E."/>
            <person name="Bork P."/>
            <person name="Suyama M."/>
            <person name="Torrents D."/>
            <person name="Waterston R.H."/>
            <person name="Wilson R.K."/>
        </authorList>
    </citation>
    <scope>NUCLEOTIDE SEQUENCE [LARGE SCALE GENOMIC DNA]</scope>
</reference>
<reference key="3">
    <citation type="journal article" date="2009" name="Cell. Signal.">
        <title>Evidence for the involvement of FAM110C protein in cell spreading and migration.</title>
        <authorList>
            <person name="Hauge H."/>
            <person name="Fjelland K.E."/>
            <person name="Sioud M."/>
            <person name="Aasheim H.C."/>
        </authorList>
    </citation>
    <scope>FUNCTION</scope>
    <scope>SUBCELLULAR LOCATION</scope>
    <scope>INTERACTION WITH AKT1; PPP2CA AND ALPHA-TUBULIN</scope>
</reference>
<reference key="4">
    <citation type="journal article" date="2013" name="J. Proteome Res.">
        <title>Toward a comprehensive characterization of a human cancer cell phosphoproteome.</title>
        <authorList>
            <person name="Zhou H."/>
            <person name="Di Palma S."/>
            <person name="Preisinger C."/>
            <person name="Peng M."/>
            <person name="Polat A.N."/>
            <person name="Heck A.J."/>
            <person name="Mohammed S."/>
        </authorList>
    </citation>
    <scope>PHOSPHORYLATION [LARGE SCALE ANALYSIS] AT SER-241</scope>
    <scope>IDENTIFICATION BY MASS SPECTROMETRY [LARGE SCALE ANALYSIS]</scope>
    <source>
        <tissue>Cervix carcinoma</tissue>
    </source>
</reference>
<sequence length="321" mass="33863">MRALAALSAPPNERLLPRDPAATRDPDAARPARRSAVERLAADRAKYVRGRPGTGRGVASEGSGPGAIKCPGNDPGPPARAPAPVARRAIARKPLRPDSLIIYRQKCEFVRGSGADGPRASLVKKLFQGPGKDKAPVPRTGDEGKAGNPETVPTTPGPAADPAIPETPAPAARSAAPSSVPAAPPGPEPRVVRRRGLQRSQSDLSSRYSAALAESDTFFQYCGLDPEVVEALGRENFTAGSDCVTLKVRSVSVATSGSGFSRHSGGDDEGLQEEELIEQVPSTTSVIERNARIIKWLYTCKKAKETPSQEQSRTRGSKPSR</sequence>
<proteinExistence type="evidence at protein level"/>
<protein>
    <recommendedName>
        <fullName>Protein FAM110C</fullName>
    </recommendedName>
</protein>
<gene>
    <name type="primary">FAM110C</name>
</gene>